<gene>
    <name evidence="1" type="primary">rpsC</name>
    <name type="ordered locus">CC_1254</name>
</gene>
<accession>Q9A8U7</accession>
<name>RS3_CAUVC</name>
<dbReference type="EMBL" id="AE005673">
    <property type="protein sequence ID" value="AAK23235.1"/>
    <property type="molecule type" value="Genomic_DNA"/>
</dbReference>
<dbReference type="PIR" id="G87404">
    <property type="entry name" value="G87404"/>
</dbReference>
<dbReference type="RefSeq" id="NP_420067.1">
    <property type="nucleotide sequence ID" value="NC_002696.2"/>
</dbReference>
<dbReference type="RefSeq" id="WP_010919133.1">
    <property type="nucleotide sequence ID" value="NC_002696.2"/>
</dbReference>
<dbReference type="SMR" id="Q9A8U7"/>
<dbReference type="STRING" id="190650.CC_1254"/>
<dbReference type="EnsemblBacteria" id="AAK23235">
    <property type="protein sequence ID" value="AAK23235"/>
    <property type="gene ID" value="CC_1254"/>
</dbReference>
<dbReference type="KEGG" id="ccr:CC_1254"/>
<dbReference type="PATRIC" id="fig|190650.5.peg.1279"/>
<dbReference type="eggNOG" id="COG0092">
    <property type="taxonomic scope" value="Bacteria"/>
</dbReference>
<dbReference type="HOGENOM" id="CLU_058591_0_2_5"/>
<dbReference type="BioCyc" id="CAULO:CC1254-MONOMER"/>
<dbReference type="Proteomes" id="UP000001816">
    <property type="component" value="Chromosome"/>
</dbReference>
<dbReference type="GO" id="GO:0022627">
    <property type="term" value="C:cytosolic small ribosomal subunit"/>
    <property type="evidence" value="ECO:0007669"/>
    <property type="project" value="TreeGrafter"/>
</dbReference>
<dbReference type="GO" id="GO:0003729">
    <property type="term" value="F:mRNA binding"/>
    <property type="evidence" value="ECO:0007669"/>
    <property type="project" value="UniProtKB-UniRule"/>
</dbReference>
<dbReference type="GO" id="GO:0019843">
    <property type="term" value="F:rRNA binding"/>
    <property type="evidence" value="ECO:0007669"/>
    <property type="project" value="UniProtKB-UniRule"/>
</dbReference>
<dbReference type="GO" id="GO:0003735">
    <property type="term" value="F:structural constituent of ribosome"/>
    <property type="evidence" value="ECO:0007669"/>
    <property type="project" value="InterPro"/>
</dbReference>
<dbReference type="GO" id="GO:0006412">
    <property type="term" value="P:translation"/>
    <property type="evidence" value="ECO:0007669"/>
    <property type="project" value="UniProtKB-UniRule"/>
</dbReference>
<dbReference type="CDD" id="cd02412">
    <property type="entry name" value="KH-II_30S_S3"/>
    <property type="match status" value="1"/>
</dbReference>
<dbReference type="FunFam" id="3.30.1140.32:FF:000001">
    <property type="entry name" value="30S ribosomal protein S3"/>
    <property type="match status" value="1"/>
</dbReference>
<dbReference type="FunFam" id="3.30.300.20:FF:000001">
    <property type="entry name" value="30S ribosomal protein S3"/>
    <property type="match status" value="1"/>
</dbReference>
<dbReference type="Gene3D" id="3.30.300.20">
    <property type="match status" value="1"/>
</dbReference>
<dbReference type="Gene3D" id="3.30.1140.32">
    <property type="entry name" value="Ribosomal protein S3, C-terminal domain"/>
    <property type="match status" value="1"/>
</dbReference>
<dbReference type="HAMAP" id="MF_01309_B">
    <property type="entry name" value="Ribosomal_uS3_B"/>
    <property type="match status" value="1"/>
</dbReference>
<dbReference type="InterPro" id="IPR004087">
    <property type="entry name" value="KH_dom"/>
</dbReference>
<dbReference type="InterPro" id="IPR015946">
    <property type="entry name" value="KH_dom-like_a/b"/>
</dbReference>
<dbReference type="InterPro" id="IPR004044">
    <property type="entry name" value="KH_dom_type_2"/>
</dbReference>
<dbReference type="InterPro" id="IPR009019">
    <property type="entry name" value="KH_sf_prok-type"/>
</dbReference>
<dbReference type="InterPro" id="IPR036419">
    <property type="entry name" value="Ribosomal_S3_C_sf"/>
</dbReference>
<dbReference type="InterPro" id="IPR005704">
    <property type="entry name" value="Ribosomal_uS3_bac-typ"/>
</dbReference>
<dbReference type="InterPro" id="IPR001351">
    <property type="entry name" value="Ribosomal_uS3_C"/>
</dbReference>
<dbReference type="InterPro" id="IPR018280">
    <property type="entry name" value="Ribosomal_uS3_CS"/>
</dbReference>
<dbReference type="NCBIfam" id="TIGR01009">
    <property type="entry name" value="rpsC_bact"/>
    <property type="match status" value="1"/>
</dbReference>
<dbReference type="PANTHER" id="PTHR11760">
    <property type="entry name" value="30S/40S RIBOSOMAL PROTEIN S3"/>
    <property type="match status" value="1"/>
</dbReference>
<dbReference type="PANTHER" id="PTHR11760:SF19">
    <property type="entry name" value="SMALL RIBOSOMAL SUBUNIT PROTEIN US3C"/>
    <property type="match status" value="1"/>
</dbReference>
<dbReference type="Pfam" id="PF07650">
    <property type="entry name" value="KH_2"/>
    <property type="match status" value="1"/>
</dbReference>
<dbReference type="Pfam" id="PF00189">
    <property type="entry name" value="Ribosomal_S3_C"/>
    <property type="match status" value="1"/>
</dbReference>
<dbReference type="SMART" id="SM00322">
    <property type="entry name" value="KH"/>
    <property type="match status" value="1"/>
</dbReference>
<dbReference type="SUPFAM" id="SSF54814">
    <property type="entry name" value="Prokaryotic type KH domain (KH-domain type II)"/>
    <property type="match status" value="1"/>
</dbReference>
<dbReference type="SUPFAM" id="SSF54821">
    <property type="entry name" value="Ribosomal protein S3 C-terminal domain"/>
    <property type="match status" value="1"/>
</dbReference>
<dbReference type="PROSITE" id="PS50823">
    <property type="entry name" value="KH_TYPE_2"/>
    <property type="match status" value="1"/>
</dbReference>
<dbReference type="PROSITE" id="PS00548">
    <property type="entry name" value="RIBOSOMAL_S3"/>
    <property type="match status" value="1"/>
</dbReference>
<keyword id="KW-1185">Reference proteome</keyword>
<keyword id="KW-0687">Ribonucleoprotein</keyword>
<keyword id="KW-0689">Ribosomal protein</keyword>
<keyword id="KW-0694">RNA-binding</keyword>
<keyword id="KW-0699">rRNA-binding</keyword>
<feature type="chain" id="PRO_0000130096" description="Small ribosomal subunit protein uS3">
    <location>
        <begin position="1"/>
        <end position="250"/>
    </location>
</feature>
<feature type="domain" description="KH type-2" evidence="1">
    <location>
        <begin position="39"/>
        <end position="107"/>
    </location>
</feature>
<feature type="region of interest" description="Disordered" evidence="2">
    <location>
        <begin position="215"/>
        <end position="250"/>
    </location>
</feature>
<feature type="compositionally biased region" description="Basic and acidic residues" evidence="2">
    <location>
        <begin position="230"/>
        <end position="250"/>
    </location>
</feature>
<evidence type="ECO:0000255" key="1">
    <source>
        <dbReference type="HAMAP-Rule" id="MF_01309"/>
    </source>
</evidence>
<evidence type="ECO:0000256" key="2">
    <source>
        <dbReference type="SAM" id="MobiDB-lite"/>
    </source>
</evidence>
<evidence type="ECO:0000305" key="3"/>
<reference key="1">
    <citation type="journal article" date="2001" name="Proc. Natl. Acad. Sci. U.S.A.">
        <title>Complete genome sequence of Caulobacter crescentus.</title>
        <authorList>
            <person name="Nierman W.C."/>
            <person name="Feldblyum T.V."/>
            <person name="Laub M.T."/>
            <person name="Paulsen I.T."/>
            <person name="Nelson K.E."/>
            <person name="Eisen J.A."/>
            <person name="Heidelberg J.F."/>
            <person name="Alley M.R.K."/>
            <person name="Ohta N."/>
            <person name="Maddock J.R."/>
            <person name="Potocka I."/>
            <person name="Nelson W.C."/>
            <person name="Newton A."/>
            <person name="Stephens C."/>
            <person name="Phadke N.D."/>
            <person name="Ely B."/>
            <person name="DeBoy R.T."/>
            <person name="Dodson R.J."/>
            <person name="Durkin A.S."/>
            <person name="Gwinn M.L."/>
            <person name="Haft D.H."/>
            <person name="Kolonay J.F."/>
            <person name="Smit J."/>
            <person name="Craven M.B."/>
            <person name="Khouri H.M."/>
            <person name="Shetty J."/>
            <person name="Berry K.J."/>
            <person name="Utterback T.R."/>
            <person name="Tran K."/>
            <person name="Wolf A.M."/>
            <person name="Vamathevan J.J."/>
            <person name="Ermolaeva M.D."/>
            <person name="White O."/>
            <person name="Salzberg S.L."/>
            <person name="Venter J.C."/>
            <person name="Shapiro L."/>
            <person name="Fraser C.M."/>
        </authorList>
    </citation>
    <scope>NUCLEOTIDE SEQUENCE [LARGE SCALE GENOMIC DNA]</scope>
    <source>
        <strain>ATCC 19089 / CIP 103742 / CB 15</strain>
    </source>
</reference>
<organism>
    <name type="scientific">Caulobacter vibrioides (strain ATCC 19089 / CIP 103742 / CB 15)</name>
    <name type="common">Caulobacter crescentus</name>
    <dbReference type="NCBI Taxonomy" id="190650"/>
    <lineage>
        <taxon>Bacteria</taxon>
        <taxon>Pseudomonadati</taxon>
        <taxon>Pseudomonadota</taxon>
        <taxon>Alphaproteobacteria</taxon>
        <taxon>Caulobacterales</taxon>
        <taxon>Caulobacteraceae</taxon>
        <taxon>Caulobacter</taxon>
    </lineage>
</organism>
<comment type="function">
    <text evidence="1">Binds the lower part of the 30S subunit head. Binds mRNA in the 70S ribosome, positioning it for translation.</text>
</comment>
<comment type="subunit">
    <text evidence="1">Part of the 30S ribosomal subunit. Forms a tight complex with proteins S10 and S14.</text>
</comment>
<comment type="similarity">
    <text evidence="1">Belongs to the universal ribosomal protein uS3 family.</text>
</comment>
<protein>
    <recommendedName>
        <fullName evidence="1">Small ribosomal subunit protein uS3</fullName>
    </recommendedName>
    <alternativeName>
        <fullName evidence="3">30S ribosomal protein S3</fullName>
    </alternativeName>
</protein>
<proteinExistence type="inferred from homology"/>
<sequence>MGQKVNPVGLRLGINRTWDSRWFADGNQYGKLLHQDLAVRAALKKRLYQAGVSRIIIERPHKKCRVTIYAARPGVIIGKKGADIDKLRKDLSIMTEGEVHLNIVEIRKPETDAQLVAESIAQQLERRIAFRRAMKRSIQSAVRLGAKGIRINVSGRLGGAEIARMEWYREGRVPLHTLRADIDFGFAEAKTTYGIIGVKTWIFKGEVLEHDPMALDKRLATESGPAGEGGGRERGDRPDRGDRRDRRDRA</sequence>